<comment type="function">
    <text evidence="1">Required for the assembly of the mitochondrial respiratory chain complex IV (CIV), also known as cytochrome c oxidase. May participate in merging the COX1 and COX2 assembly lines.</text>
</comment>
<comment type="subcellular location">
    <subcellularLocation>
        <location evidence="1">Mitochondrion inner membrane</location>
        <topology evidence="1">Single-pass membrane protein</topology>
    </subcellularLocation>
</comment>
<comment type="similarity">
    <text evidence="3">Belongs to the COX16 family.</text>
</comment>
<organism>
    <name type="scientific">Coccidioides immitis (strain RS)</name>
    <name type="common">Valley fever fungus</name>
    <dbReference type="NCBI Taxonomy" id="246410"/>
    <lineage>
        <taxon>Eukaryota</taxon>
        <taxon>Fungi</taxon>
        <taxon>Dikarya</taxon>
        <taxon>Ascomycota</taxon>
        <taxon>Pezizomycotina</taxon>
        <taxon>Eurotiomycetes</taxon>
        <taxon>Eurotiomycetidae</taxon>
        <taxon>Onygenales</taxon>
        <taxon>Onygenaceae</taxon>
        <taxon>Coccidioides</taxon>
    </lineage>
</organism>
<proteinExistence type="inferred from homology"/>
<keyword id="KW-0472">Membrane</keyword>
<keyword id="KW-0496">Mitochondrion</keyword>
<keyword id="KW-0999">Mitochondrion inner membrane</keyword>
<keyword id="KW-1185">Reference proteome</keyword>
<keyword id="KW-0809">Transit peptide</keyword>
<keyword id="KW-0812">Transmembrane</keyword>
<keyword id="KW-1133">Transmembrane helix</keyword>
<gene>
    <name type="primary">COX16</name>
    <name type="ORF">CIMG_08520</name>
</gene>
<accession>Q1DME3</accession>
<accession>J3K6C0</accession>
<name>COX16_COCIM</name>
<feature type="transit peptide" description="Mitochondrion" evidence="2">
    <location>
        <begin position="1"/>
        <end position="11"/>
    </location>
</feature>
<feature type="chain" id="PRO_0000280644" description="Cytochrome c oxidase assembly protein COX16, mitochondrial">
    <location>
        <begin position="12"/>
        <end position="137"/>
    </location>
</feature>
<feature type="transmembrane region" description="Helical" evidence="2">
    <location>
        <begin position="35"/>
        <end position="55"/>
    </location>
</feature>
<dbReference type="EMBL" id="GG704913">
    <property type="protein sequence ID" value="EAS29774.3"/>
    <property type="molecule type" value="Genomic_DNA"/>
</dbReference>
<dbReference type="RefSeq" id="XP_001241357.1">
    <property type="nucleotide sequence ID" value="XM_001241356.2"/>
</dbReference>
<dbReference type="FunCoup" id="Q1DME3">
    <property type="interactions" value="128"/>
</dbReference>
<dbReference type="STRING" id="246410.Q1DME3"/>
<dbReference type="MEROPS" id="M03.009"/>
<dbReference type="GeneID" id="4560356"/>
<dbReference type="KEGG" id="cim:CIMG_08520"/>
<dbReference type="VEuPathDB" id="FungiDB:CIMG_08520"/>
<dbReference type="InParanoid" id="Q1DME3"/>
<dbReference type="OMA" id="VNMKDEY"/>
<dbReference type="OrthoDB" id="5516033at2759"/>
<dbReference type="Proteomes" id="UP000001261">
    <property type="component" value="Unassembled WGS sequence"/>
</dbReference>
<dbReference type="GO" id="GO:0005743">
    <property type="term" value="C:mitochondrial inner membrane"/>
    <property type="evidence" value="ECO:0007669"/>
    <property type="project" value="UniProtKB-SubCell"/>
</dbReference>
<dbReference type="GO" id="GO:0033617">
    <property type="term" value="P:mitochondrial cytochrome c oxidase assembly"/>
    <property type="evidence" value="ECO:0007669"/>
    <property type="project" value="TreeGrafter"/>
</dbReference>
<dbReference type="InterPro" id="IPR020164">
    <property type="entry name" value="Cyt_c_Oxase_assmbl_COX16"/>
</dbReference>
<dbReference type="PANTHER" id="PTHR17130:SF14">
    <property type="entry name" value="CYTOCHROME C OXIDASE ASSEMBLY PROTEIN COX16 HOMOLOG, MITOCHONDRIAL"/>
    <property type="match status" value="1"/>
</dbReference>
<dbReference type="PANTHER" id="PTHR17130">
    <property type="entry name" value="MITOCHONDRIAL OUTER MEMBRANE PROTEIN 25"/>
    <property type="match status" value="1"/>
</dbReference>
<dbReference type="Pfam" id="PF14138">
    <property type="entry name" value="COX16"/>
    <property type="match status" value="1"/>
</dbReference>
<evidence type="ECO:0000250" key="1">
    <source>
        <dbReference type="UniProtKB" id="P47081"/>
    </source>
</evidence>
<evidence type="ECO:0000255" key="2"/>
<evidence type="ECO:0000305" key="3"/>
<sequence length="137" mass="15705">MPVFQTKRFRPSTSAGSTLGDRIGQMYRAHLSKHPFLLFGLPFLSLMVAGSFVLTPATALRYERHDRKVQQVSQQEALALGIKGPDGDGENDIKMNPRRRVLGSEKEEYYRLMAKDLDNWEQKRVQRWKGEPDGRLS</sequence>
<protein>
    <recommendedName>
        <fullName>Cytochrome c oxidase assembly protein COX16, mitochondrial</fullName>
    </recommendedName>
</protein>
<reference key="1">
    <citation type="journal article" date="2009" name="Genome Res.">
        <title>Comparative genomic analyses of the human fungal pathogens Coccidioides and their relatives.</title>
        <authorList>
            <person name="Sharpton T.J."/>
            <person name="Stajich J.E."/>
            <person name="Rounsley S.D."/>
            <person name="Gardner M.J."/>
            <person name="Wortman J.R."/>
            <person name="Jordar V.S."/>
            <person name="Maiti R."/>
            <person name="Kodira C.D."/>
            <person name="Neafsey D.E."/>
            <person name="Zeng Q."/>
            <person name="Hung C.-Y."/>
            <person name="McMahan C."/>
            <person name="Muszewska A."/>
            <person name="Grynberg M."/>
            <person name="Mandel M.A."/>
            <person name="Kellner E.M."/>
            <person name="Barker B.M."/>
            <person name="Galgiani J.N."/>
            <person name="Orbach M.J."/>
            <person name="Kirkland T.N."/>
            <person name="Cole G.T."/>
            <person name="Henn M.R."/>
            <person name="Birren B.W."/>
            <person name="Taylor J.W."/>
        </authorList>
    </citation>
    <scope>NUCLEOTIDE SEQUENCE [LARGE SCALE GENOMIC DNA]</scope>
    <source>
        <strain>RS</strain>
    </source>
</reference>
<reference key="2">
    <citation type="journal article" date="2010" name="Genome Res.">
        <title>Population genomic sequencing of Coccidioides fungi reveals recent hybridization and transposon control.</title>
        <authorList>
            <person name="Neafsey D.E."/>
            <person name="Barker B.M."/>
            <person name="Sharpton T.J."/>
            <person name="Stajich J.E."/>
            <person name="Park D.J."/>
            <person name="Whiston E."/>
            <person name="Hung C.-Y."/>
            <person name="McMahan C."/>
            <person name="White J."/>
            <person name="Sykes S."/>
            <person name="Heiman D."/>
            <person name="Young S."/>
            <person name="Zeng Q."/>
            <person name="Abouelleil A."/>
            <person name="Aftuck L."/>
            <person name="Bessette D."/>
            <person name="Brown A."/>
            <person name="FitzGerald M."/>
            <person name="Lui A."/>
            <person name="Macdonald J.P."/>
            <person name="Priest M."/>
            <person name="Orbach M.J."/>
            <person name="Galgiani J.N."/>
            <person name="Kirkland T.N."/>
            <person name="Cole G.T."/>
            <person name="Birren B.W."/>
            <person name="Henn M.R."/>
            <person name="Taylor J.W."/>
            <person name="Rounsley S.D."/>
        </authorList>
    </citation>
    <scope>GENOME REANNOTATION</scope>
    <source>
        <strain>RS</strain>
    </source>
</reference>